<proteinExistence type="inferred from homology"/>
<protein>
    <recommendedName>
        <fullName evidence="2">N(4)-acetylcytidine amidohydrolase</fullName>
        <shortName evidence="2">ac4C amidohydrolase</shortName>
        <ecNumber evidence="2">3.5.1.135</ecNumber>
    </recommendedName>
</protein>
<sequence>MSVPTQITFFEFLTPLVASGQKTITIRDKSESHYVPGTRVEVFTLETQRKVCEIDILAVEPLKFDEINEFHAEQEAIELPKLKALIQEIYPNIDELYVITYQLAKSSSARIMVK</sequence>
<gene>
    <name type="ordered locus">VC0395_A1180</name>
    <name type="ordered locus">VC395_1692</name>
</gene>
<accession>A5F7V7</accession>
<accession>C3M0Y1</accession>
<feature type="chain" id="PRO_1000072734" description="N(4)-acetylcytidine amidohydrolase">
    <location>
        <begin position="1"/>
        <end position="114"/>
    </location>
</feature>
<feature type="domain" description="ASCH" evidence="1">
    <location>
        <begin position="8"/>
        <end position="93"/>
    </location>
</feature>
<feature type="active site" description="Proton acceptor" evidence="2">
    <location>
        <position position="22"/>
    </location>
</feature>
<feature type="active site" description="Nucleophile" evidence="2">
    <location>
        <position position="25"/>
    </location>
</feature>
<feature type="active site" description="Proton donor" evidence="2">
    <location>
        <position position="75"/>
    </location>
</feature>
<organism>
    <name type="scientific">Vibrio cholerae serotype O1 (strain ATCC 39541 / Classical Ogawa 395 / O395)</name>
    <dbReference type="NCBI Taxonomy" id="345073"/>
    <lineage>
        <taxon>Bacteria</taxon>
        <taxon>Pseudomonadati</taxon>
        <taxon>Pseudomonadota</taxon>
        <taxon>Gammaproteobacteria</taxon>
        <taxon>Vibrionales</taxon>
        <taxon>Vibrionaceae</taxon>
        <taxon>Vibrio</taxon>
    </lineage>
</organism>
<name>AC4CH_VIBC3</name>
<evidence type="ECO:0000255" key="1"/>
<evidence type="ECO:0000255" key="2">
    <source>
        <dbReference type="HAMAP-Rule" id="MF_00684"/>
    </source>
</evidence>
<reference key="1">
    <citation type="submission" date="2007-03" db="EMBL/GenBank/DDBJ databases">
        <authorList>
            <person name="Heidelberg J."/>
        </authorList>
    </citation>
    <scope>NUCLEOTIDE SEQUENCE [LARGE SCALE GENOMIC DNA]</scope>
    <source>
        <strain>ATCC 39541 / Classical Ogawa 395 / O395</strain>
    </source>
</reference>
<reference key="2">
    <citation type="journal article" date="2008" name="PLoS ONE">
        <title>A recalibrated molecular clock and independent origins for the cholera pandemic clones.</title>
        <authorList>
            <person name="Feng L."/>
            <person name="Reeves P.R."/>
            <person name="Lan R."/>
            <person name="Ren Y."/>
            <person name="Gao C."/>
            <person name="Zhou Z."/>
            <person name="Ren Y."/>
            <person name="Cheng J."/>
            <person name="Wang W."/>
            <person name="Wang J."/>
            <person name="Qian W."/>
            <person name="Li D."/>
            <person name="Wang L."/>
        </authorList>
    </citation>
    <scope>NUCLEOTIDE SEQUENCE [LARGE SCALE GENOMIC DNA]</scope>
    <source>
        <strain>ATCC 39541 / Classical Ogawa 395 / O395</strain>
    </source>
</reference>
<keyword id="KW-0378">Hydrolase</keyword>
<comment type="function">
    <text evidence="2">Catalyzes the hydrolysis of N(4)-acetylcytidine (ac4C).</text>
</comment>
<comment type="catalytic activity">
    <reaction evidence="2">
        <text>N(4)-acetylcytidine + H2O = cytidine + acetate + H(+)</text>
        <dbReference type="Rhea" id="RHEA:62932"/>
        <dbReference type="ChEBI" id="CHEBI:15377"/>
        <dbReference type="ChEBI" id="CHEBI:15378"/>
        <dbReference type="ChEBI" id="CHEBI:17562"/>
        <dbReference type="ChEBI" id="CHEBI:30089"/>
        <dbReference type="ChEBI" id="CHEBI:70989"/>
        <dbReference type="EC" id="3.5.1.135"/>
    </reaction>
</comment>
<comment type="catalytic activity">
    <reaction evidence="2">
        <text>N(4)-acetyl-2'-deoxycytidine + H2O = 2'-deoxycytidine + acetate + H(+)</text>
        <dbReference type="Rhea" id="RHEA:62936"/>
        <dbReference type="ChEBI" id="CHEBI:15377"/>
        <dbReference type="ChEBI" id="CHEBI:15378"/>
        <dbReference type="ChEBI" id="CHEBI:15698"/>
        <dbReference type="ChEBI" id="CHEBI:30089"/>
        <dbReference type="ChEBI" id="CHEBI:146133"/>
        <dbReference type="EC" id="3.5.1.135"/>
    </reaction>
</comment>
<comment type="catalytic activity">
    <reaction evidence="2">
        <text>N(4)-acetylcytosine + H2O = cytosine + acetate + H(+)</text>
        <dbReference type="Rhea" id="RHEA:62940"/>
        <dbReference type="ChEBI" id="CHEBI:15377"/>
        <dbReference type="ChEBI" id="CHEBI:15378"/>
        <dbReference type="ChEBI" id="CHEBI:16040"/>
        <dbReference type="ChEBI" id="CHEBI:30089"/>
        <dbReference type="ChEBI" id="CHEBI:146134"/>
        <dbReference type="EC" id="3.5.1.135"/>
    </reaction>
</comment>
<comment type="similarity">
    <text evidence="2">Belongs to the N(4)-acetylcytidine amidohydrolase family.</text>
</comment>
<dbReference type="EC" id="3.5.1.135" evidence="2"/>
<dbReference type="EMBL" id="CP000627">
    <property type="protein sequence ID" value="ABQ21015.1"/>
    <property type="molecule type" value="Genomic_DNA"/>
</dbReference>
<dbReference type="EMBL" id="CP001235">
    <property type="protein sequence ID" value="ACP09697.1"/>
    <property type="molecule type" value="Genomic_DNA"/>
</dbReference>
<dbReference type="SMR" id="A5F7V7"/>
<dbReference type="KEGG" id="vco:VC0395_A1180"/>
<dbReference type="KEGG" id="vcr:VC395_1692"/>
<dbReference type="PATRIC" id="fig|345073.21.peg.1638"/>
<dbReference type="eggNOG" id="COG3097">
    <property type="taxonomic scope" value="Bacteria"/>
</dbReference>
<dbReference type="HOGENOM" id="CLU_152586_0_0_6"/>
<dbReference type="OrthoDB" id="8590202at2"/>
<dbReference type="Proteomes" id="UP000000249">
    <property type="component" value="Chromosome 2"/>
</dbReference>
<dbReference type="GO" id="GO:0005829">
    <property type="term" value="C:cytosol"/>
    <property type="evidence" value="ECO:0007669"/>
    <property type="project" value="TreeGrafter"/>
</dbReference>
<dbReference type="GO" id="GO:0016813">
    <property type="term" value="F:hydrolase activity, acting on carbon-nitrogen (but not peptide) bonds, in linear amidines"/>
    <property type="evidence" value="ECO:0007669"/>
    <property type="project" value="UniProtKB-UniRule"/>
</dbReference>
<dbReference type="GO" id="GO:0106251">
    <property type="term" value="F:N4-acetylcytidine amidohydrolase activity"/>
    <property type="evidence" value="ECO:0007669"/>
    <property type="project" value="RHEA"/>
</dbReference>
<dbReference type="CDD" id="cd06552">
    <property type="entry name" value="ASCH_yqfb_like"/>
    <property type="match status" value="1"/>
</dbReference>
<dbReference type="Gene3D" id="2.30.130.30">
    <property type="entry name" value="Hypothetical protein"/>
    <property type="match status" value="1"/>
</dbReference>
<dbReference type="HAMAP" id="MF_00684">
    <property type="entry name" value="ac4C_amidohydr"/>
    <property type="match status" value="1"/>
</dbReference>
<dbReference type="InterPro" id="IPR008314">
    <property type="entry name" value="AC4CH"/>
</dbReference>
<dbReference type="InterPro" id="IPR007374">
    <property type="entry name" value="ASCH_domain"/>
</dbReference>
<dbReference type="InterPro" id="IPR015947">
    <property type="entry name" value="PUA-like_sf"/>
</dbReference>
<dbReference type="NCBIfam" id="NF003443">
    <property type="entry name" value="PRK04980.1"/>
    <property type="match status" value="1"/>
</dbReference>
<dbReference type="PANTHER" id="PTHR38088">
    <property type="entry name" value="UCP029143 FAMILY PROTEIN"/>
    <property type="match status" value="1"/>
</dbReference>
<dbReference type="PANTHER" id="PTHR38088:SF2">
    <property type="entry name" value="UCP029143 FAMILY PROTEIN"/>
    <property type="match status" value="1"/>
</dbReference>
<dbReference type="Pfam" id="PF04266">
    <property type="entry name" value="ASCH"/>
    <property type="match status" value="1"/>
</dbReference>
<dbReference type="PIRSF" id="PIRSF029143">
    <property type="entry name" value="UCP029143"/>
    <property type="match status" value="1"/>
</dbReference>
<dbReference type="SMART" id="SM01022">
    <property type="entry name" value="ASCH"/>
    <property type="match status" value="1"/>
</dbReference>
<dbReference type="SUPFAM" id="SSF88697">
    <property type="entry name" value="PUA domain-like"/>
    <property type="match status" value="1"/>
</dbReference>